<dbReference type="EC" id="6.3.5.3" evidence="1"/>
<dbReference type="EC" id="3.5.1.2" evidence="1"/>
<dbReference type="EMBL" id="CP000359">
    <property type="protein sequence ID" value="ABF44368.1"/>
    <property type="molecule type" value="Genomic_DNA"/>
</dbReference>
<dbReference type="RefSeq" id="WP_011529215.1">
    <property type="nucleotide sequence ID" value="NC_008025.1"/>
</dbReference>
<dbReference type="SMR" id="Q1J2B6"/>
<dbReference type="STRING" id="319795.Dgeo_0065"/>
<dbReference type="KEGG" id="dge:Dgeo_0065"/>
<dbReference type="eggNOG" id="COG0047">
    <property type="taxonomic scope" value="Bacteria"/>
</dbReference>
<dbReference type="HOGENOM" id="CLU_001031_3_1_0"/>
<dbReference type="UniPathway" id="UPA00074">
    <property type="reaction ID" value="UER00128"/>
</dbReference>
<dbReference type="Proteomes" id="UP000002431">
    <property type="component" value="Chromosome"/>
</dbReference>
<dbReference type="GO" id="GO:0005737">
    <property type="term" value="C:cytoplasm"/>
    <property type="evidence" value="ECO:0007669"/>
    <property type="project" value="UniProtKB-SubCell"/>
</dbReference>
<dbReference type="GO" id="GO:0005524">
    <property type="term" value="F:ATP binding"/>
    <property type="evidence" value="ECO:0007669"/>
    <property type="project" value="UniProtKB-KW"/>
</dbReference>
<dbReference type="GO" id="GO:0004359">
    <property type="term" value="F:glutaminase activity"/>
    <property type="evidence" value="ECO:0007669"/>
    <property type="project" value="UniProtKB-EC"/>
</dbReference>
<dbReference type="GO" id="GO:0004642">
    <property type="term" value="F:phosphoribosylformylglycinamidine synthase activity"/>
    <property type="evidence" value="ECO:0007669"/>
    <property type="project" value="UniProtKB-UniRule"/>
</dbReference>
<dbReference type="GO" id="GO:0006189">
    <property type="term" value="P:'de novo' IMP biosynthetic process"/>
    <property type="evidence" value="ECO:0007669"/>
    <property type="project" value="UniProtKB-UniRule"/>
</dbReference>
<dbReference type="CDD" id="cd01740">
    <property type="entry name" value="GATase1_FGAR_AT"/>
    <property type="match status" value="1"/>
</dbReference>
<dbReference type="Gene3D" id="3.40.50.880">
    <property type="match status" value="1"/>
</dbReference>
<dbReference type="HAMAP" id="MF_00421">
    <property type="entry name" value="PurQ"/>
    <property type="match status" value="1"/>
</dbReference>
<dbReference type="InterPro" id="IPR029062">
    <property type="entry name" value="Class_I_gatase-like"/>
</dbReference>
<dbReference type="InterPro" id="IPR010075">
    <property type="entry name" value="PRibForGlyAmidine_synth_PurQ"/>
</dbReference>
<dbReference type="NCBIfam" id="TIGR01737">
    <property type="entry name" value="FGAM_synth_I"/>
    <property type="match status" value="1"/>
</dbReference>
<dbReference type="NCBIfam" id="NF002957">
    <property type="entry name" value="PRK03619.1"/>
    <property type="match status" value="1"/>
</dbReference>
<dbReference type="PANTHER" id="PTHR47552">
    <property type="entry name" value="PHOSPHORIBOSYLFORMYLGLYCINAMIDINE SYNTHASE SUBUNIT PURQ"/>
    <property type="match status" value="1"/>
</dbReference>
<dbReference type="PANTHER" id="PTHR47552:SF1">
    <property type="entry name" value="PHOSPHORIBOSYLFORMYLGLYCINAMIDINE SYNTHASE SUBUNIT PURQ"/>
    <property type="match status" value="1"/>
</dbReference>
<dbReference type="Pfam" id="PF13507">
    <property type="entry name" value="GATase_5"/>
    <property type="match status" value="1"/>
</dbReference>
<dbReference type="PIRSF" id="PIRSF001586">
    <property type="entry name" value="FGAM_synth_I"/>
    <property type="match status" value="1"/>
</dbReference>
<dbReference type="SMART" id="SM01211">
    <property type="entry name" value="GATase_5"/>
    <property type="match status" value="1"/>
</dbReference>
<dbReference type="SUPFAM" id="SSF52317">
    <property type="entry name" value="Class I glutamine amidotransferase-like"/>
    <property type="match status" value="1"/>
</dbReference>
<dbReference type="PROSITE" id="PS51273">
    <property type="entry name" value="GATASE_TYPE_1"/>
    <property type="match status" value="1"/>
</dbReference>
<proteinExistence type="inferred from homology"/>
<accession>Q1J2B6</accession>
<sequence length="222" mass="23853">MRTAVIQFPGSNCDADALHAARLTLDPDAGFVWHTETALPRGTELVFLPGGFSYGDHLRSGAIAARSPIMAAVKAHAERGGFVLGVCNGFQVLTEAGLLPGALSRNRDLHFRCAPVHLRVENAQTVFTRAYQPGQILEIPIAHGEGNYYADPETIARLEAEGRVVFRYVDNPNGSLNDIAGIVNERGNVLGMMPHPERAVEALLGSEDGRGIFESLKGALVQ</sequence>
<organism>
    <name type="scientific">Deinococcus geothermalis (strain DSM 11300 / CIP 105573 / AG-3a)</name>
    <dbReference type="NCBI Taxonomy" id="319795"/>
    <lineage>
        <taxon>Bacteria</taxon>
        <taxon>Thermotogati</taxon>
        <taxon>Deinococcota</taxon>
        <taxon>Deinococci</taxon>
        <taxon>Deinococcales</taxon>
        <taxon>Deinococcaceae</taxon>
        <taxon>Deinococcus</taxon>
    </lineage>
</organism>
<evidence type="ECO:0000255" key="1">
    <source>
        <dbReference type="HAMAP-Rule" id="MF_00421"/>
    </source>
</evidence>
<gene>
    <name evidence="1" type="primary">purQ</name>
    <name type="ordered locus">Dgeo_0065</name>
</gene>
<name>PURQ_DEIGD</name>
<comment type="function">
    <text evidence="1">Part of the phosphoribosylformylglycinamidine synthase complex involved in the purines biosynthetic pathway. Catalyzes the ATP-dependent conversion of formylglycinamide ribonucleotide (FGAR) and glutamine to yield formylglycinamidine ribonucleotide (FGAM) and glutamate. The FGAM synthase complex is composed of three subunits. PurQ produces an ammonia molecule by converting glutamine to glutamate. PurL transfers the ammonia molecule to FGAR to form FGAM in an ATP-dependent manner. PurS interacts with PurQ and PurL and is thought to assist in the transfer of the ammonia molecule from PurQ to PurL.</text>
</comment>
<comment type="catalytic activity">
    <reaction evidence="1">
        <text>N(2)-formyl-N(1)-(5-phospho-beta-D-ribosyl)glycinamide + L-glutamine + ATP + H2O = 2-formamido-N(1)-(5-O-phospho-beta-D-ribosyl)acetamidine + L-glutamate + ADP + phosphate + H(+)</text>
        <dbReference type="Rhea" id="RHEA:17129"/>
        <dbReference type="ChEBI" id="CHEBI:15377"/>
        <dbReference type="ChEBI" id="CHEBI:15378"/>
        <dbReference type="ChEBI" id="CHEBI:29985"/>
        <dbReference type="ChEBI" id="CHEBI:30616"/>
        <dbReference type="ChEBI" id="CHEBI:43474"/>
        <dbReference type="ChEBI" id="CHEBI:58359"/>
        <dbReference type="ChEBI" id="CHEBI:147286"/>
        <dbReference type="ChEBI" id="CHEBI:147287"/>
        <dbReference type="ChEBI" id="CHEBI:456216"/>
        <dbReference type="EC" id="6.3.5.3"/>
    </reaction>
</comment>
<comment type="catalytic activity">
    <reaction evidence="1">
        <text>L-glutamine + H2O = L-glutamate + NH4(+)</text>
        <dbReference type="Rhea" id="RHEA:15889"/>
        <dbReference type="ChEBI" id="CHEBI:15377"/>
        <dbReference type="ChEBI" id="CHEBI:28938"/>
        <dbReference type="ChEBI" id="CHEBI:29985"/>
        <dbReference type="ChEBI" id="CHEBI:58359"/>
        <dbReference type="EC" id="3.5.1.2"/>
    </reaction>
</comment>
<comment type="pathway">
    <text evidence="1">Purine metabolism; IMP biosynthesis via de novo pathway; 5-amino-1-(5-phospho-D-ribosyl)imidazole from N(2)-formyl-N(1)-(5-phospho-D-ribosyl)glycinamide: step 1/2.</text>
</comment>
<comment type="subunit">
    <text evidence="1">Part of the FGAM synthase complex composed of 1 PurL, 1 PurQ and 2 PurS subunits.</text>
</comment>
<comment type="subcellular location">
    <subcellularLocation>
        <location evidence="1">Cytoplasm</location>
    </subcellularLocation>
</comment>
<feature type="chain" id="PRO_0000252705" description="Phosphoribosylformylglycinamidine synthase subunit PurQ">
    <location>
        <begin position="1"/>
        <end position="222"/>
    </location>
</feature>
<feature type="domain" description="Glutamine amidotransferase type-1" evidence="1">
    <location>
        <begin position="2"/>
        <end position="222"/>
    </location>
</feature>
<feature type="active site" description="Nucleophile" evidence="1">
    <location>
        <position position="87"/>
    </location>
</feature>
<feature type="active site" evidence="1">
    <location>
        <position position="195"/>
    </location>
</feature>
<feature type="active site" evidence="1">
    <location>
        <position position="197"/>
    </location>
</feature>
<keyword id="KW-0067">ATP-binding</keyword>
<keyword id="KW-0963">Cytoplasm</keyword>
<keyword id="KW-0315">Glutamine amidotransferase</keyword>
<keyword id="KW-0378">Hydrolase</keyword>
<keyword id="KW-0436">Ligase</keyword>
<keyword id="KW-0547">Nucleotide-binding</keyword>
<keyword id="KW-0658">Purine biosynthesis</keyword>
<protein>
    <recommendedName>
        <fullName evidence="1">Phosphoribosylformylglycinamidine synthase subunit PurQ</fullName>
        <shortName evidence="1">FGAM synthase</shortName>
        <ecNumber evidence="1">6.3.5.3</ecNumber>
    </recommendedName>
    <alternativeName>
        <fullName evidence="1">Formylglycinamide ribonucleotide amidotransferase subunit I</fullName>
        <shortName evidence="1">FGAR amidotransferase I</shortName>
        <shortName evidence="1">FGAR-AT I</shortName>
    </alternativeName>
    <alternativeName>
        <fullName evidence="1">Glutaminase PurQ</fullName>
        <ecNumber evidence="1">3.5.1.2</ecNumber>
    </alternativeName>
    <alternativeName>
        <fullName evidence="1">Phosphoribosylformylglycinamidine synthase subunit I</fullName>
    </alternativeName>
</protein>
<reference key="1">
    <citation type="submission" date="2006-04" db="EMBL/GenBank/DDBJ databases">
        <title>Complete sequence of chromosome of Deinococcus geothermalis DSM 11300.</title>
        <authorList>
            <person name="Copeland A."/>
            <person name="Lucas S."/>
            <person name="Lapidus A."/>
            <person name="Barry K."/>
            <person name="Detter J.C."/>
            <person name="Glavina del Rio T."/>
            <person name="Hammon N."/>
            <person name="Israni S."/>
            <person name="Dalin E."/>
            <person name="Tice H."/>
            <person name="Pitluck S."/>
            <person name="Brettin T."/>
            <person name="Bruce D."/>
            <person name="Han C."/>
            <person name="Tapia R."/>
            <person name="Saunders E."/>
            <person name="Gilna P."/>
            <person name="Schmutz J."/>
            <person name="Larimer F."/>
            <person name="Land M."/>
            <person name="Hauser L."/>
            <person name="Kyrpides N."/>
            <person name="Kim E."/>
            <person name="Daly M.J."/>
            <person name="Fredrickson J.K."/>
            <person name="Makarova K.S."/>
            <person name="Gaidamakova E.K."/>
            <person name="Zhai M."/>
            <person name="Richardson P."/>
        </authorList>
    </citation>
    <scope>NUCLEOTIDE SEQUENCE [LARGE SCALE GENOMIC DNA]</scope>
    <source>
        <strain>DSM 11300 / CIP 105573 / AG-3a</strain>
    </source>
</reference>